<feature type="initiator methionine" description="Removed" evidence="1">
    <location>
        <position position="1"/>
    </location>
</feature>
<feature type="chain" id="PRO_0000409771" description="Large ribosomal subunit protein eL18B">
    <location>
        <begin position="2"/>
        <end position="186"/>
    </location>
</feature>
<feature type="modified residue" description="N6,N6,N6-trimethyllysine" evidence="6">
    <location>
        <position position="50"/>
    </location>
</feature>
<feature type="cross-link" description="Glycyl lysine isopeptide (Lys-Gly) (interchain with G-Cter in ubiquitin)" evidence="12">
    <location>
        <position position="116"/>
    </location>
</feature>
<organism>
    <name type="scientific">Saccharomyces cerevisiae (strain ATCC 204508 / S288c)</name>
    <name type="common">Baker's yeast</name>
    <dbReference type="NCBI Taxonomy" id="559292"/>
    <lineage>
        <taxon>Eukaryota</taxon>
        <taxon>Fungi</taxon>
        <taxon>Dikarya</taxon>
        <taxon>Ascomycota</taxon>
        <taxon>Saccharomycotina</taxon>
        <taxon>Saccharomycetes</taxon>
        <taxon>Saccharomycetales</taxon>
        <taxon>Saccharomycetaceae</taxon>
        <taxon>Saccharomyces</taxon>
    </lineage>
</organism>
<accession>P0CX50</accession>
<accession>D6W0P3</accession>
<accession>P07279</accession>
<keyword id="KW-0002">3D-structure</keyword>
<keyword id="KW-0963">Cytoplasm</keyword>
<keyword id="KW-1017">Isopeptide bond</keyword>
<keyword id="KW-0488">Methylation</keyword>
<keyword id="KW-1185">Reference proteome</keyword>
<keyword id="KW-0687">Ribonucleoprotein</keyword>
<keyword id="KW-0689">Ribosomal protein</keyword>
<keyword id="KW-0832">Ubl conjugation</keyword>
<sequence length="186" mass="20563">MGIDHTSKQHKRSGHRTAPKSDNVYLKLLVKLYTFLARRTDAPFNKVVLKALFLSKINRPPVSVSRIARALKQEGAANKTVVVVGTVTDDARIFEFPKTTVAALRFTAGARAKIVKAGGECITLDQLAVRAPKGQNTLILRGPRNSREAVRHFGMGPHKGKAPRILSTGRKFERARGRRRSKGFKV</sequence>
<name>RL18B_YEAST</name>
<reference key="1">
    <citation type="journal article" date="1984" name="Nucleic Acids Res.">
        <title>Structure and organization of two linked ribosomal protein genes in yeast.</title>
        <authorList>
            <person name="Molenaar C.M.T."/>
            <person name="Woudt L.P."/>
            <person name="Jansen A.E.M."/>
            <person name="Mager W.H."/>
            <person name="Planta R.J."/>
            <person name="Donovan D.M."/>
            <person name="Pearson N.J."/>
        </authorList>
    </citation>
    <scope>NUCLEOTIDE SEQUENCE [GENOMIC DNA]</scope>
</reference>
<reference key="2">
    <citation type="journal article" date="1995" name="Yeast">
        <title>Sequence analysis of a 30 kb DNA segment from yeast chromosome XIV carrying a ribosomal protein gene cluster, the genes encoding a plasma membrane protein and a subunit of replication factor C, and a novel putative serine/threonine protein kinase gene.</title>
        <authorList>
            <person name="Maurer K.C.T."/>
            <person name="Urbanus J.H.M."/>
            <person name="Planta R.J."/>
        </authorList>
    </citation>
    <scope>NUCLEOTIDE SEQUENCE [GENOMIC DNA]</scope>
    <source>
        <strain>ATCC 96604 / S288c / FY1679</strain>
    </source>
</reference>
<reference key="3">
    <citation type="journal article" date="1997" name="Nature">
        <title>The nucleotide sequence of Saccharomyces cerevisiae chromosome XIV and its evolutionary implications.</title>
        <authorList>
            <person name="Philippsen P."/>
            <person name="Kleine K."/>
            <person name="Poehlmann R."/>
            <person name="Duesterhoeft A."/>
            <person name="Hamberg K."/>
            <person name="Hegemann J.H."/>
            <person name="Obermaier B."/>
            <person name="Urrestarazu L.A."/>
            <person name="Aert R."/>
            <person name="Albermann K."/>
            <person name="Altmann R."/>
            <person name="Andre B."/>
            <person name="Baladron V."/>
            <person name="Ballesta J.P.G."/>
            <person name="Becam A.-M."/>
            <person name="Beinhauer J.D."/>
            <person name="Boskovic J."/>
            <person name="Buitrago M.J."/>
            <person name="Bussereau F."/>
            <person name="Coster F."/>
            <person name="Crouzet M."/>
            <person name="D'Angelo M."/>
            <person name="Dal Pero F."/>
            <person name="De Antoni A."/>
            <person name="del Rey F."/>
            <person name="Doignon F."/>
            <person name="Domdey H."/>
            <person name="Dubois E."/>
            <person name="Fiedler T.A."/>
            <person name="Fleig U."/>
            <person name="Floeth M."/>
            <person name="Fritz C."/>
            <person name="Gaillardin C."/>
            <person name="Garcia-Cantalejo J.M."/>
            <person name="Glansdorff N."/>
            <person name="Goffeau A."/>
            <person name="Gueldener U."/>
            <person name="Herbert C.J."/>
            <person name="Heumann K."/>
            <person name="Heuss-Neitzel D."/>
            <person name="Hilbert H."/>
            <person name="Hinni K."/>
            <person name="Iraqui Houssaini I."/>
            <person name="Jacquet M."/>
            <person name="Jimenez A."/>
            <person name="Jonniaux J.-L."/>
            <person name="Karpfinger-Hartl L."/>
            <person name="Lanfranchi G."/>
            <person name="Lepingle A."/>
            <person name="Levesque H."/>
            <person name="Lyck R."/>
            <person name="Maftahi M."/>
            <person name="Mallet L."/>
            <person name="Maurer C.T.C."/>
            <person name="Messenguy F."/>
            <person name="Mewes H.-W."/>
            <person name="Moestl D."/>
            <person name="Nasr F."/>
            <person name="Nicaud J.-M."/>
            <person name="Niedenthal R.K."/>
            <person name="Pandolfo D."/>
            <person name="Pierard A."/>
            <person name="Piravandi E."/>
            <person name="Planta R.J."/>
            <person name="Pohl T.M."/>
            <person name="Purnelle B."/>
            <person name="Rebischung C."/>
            <person name="Remacha M.A."/>
            <person name="Revuelta J.L."/>
            <person name="Rinke M."/>
            <person name="Saiz J.E."/>
            <person name="Sartorello F."/>
            <person name="Scherens B."/>
            <person name="Sen-Gupta M."/>
            <person name="Soler-Mira A."/>
            <person name="Urbanus J.H.M."/>
            <person name="Valle G."/>
            <person name="Van Dyck L."/>
            <person name="Verhasselt P."/>
            <person name="Vierendeels F."/>
            <person name="Vissers S."/>
            <person name="Voet M."/>
            <person name="Volckaert G."/>
            <person name="Wach A."/>
            <person name="Wambutt R."/>
            <person name="Wedler H."/>
            <person name="Zollner A."/>
            <person name="Hani J."/>
        </authorList>
    </citation>
    <scope>NUCLEOTIDE SEQUENCE [LARGE SCALE GENOMIC DNA]</scope>
    <source>
        <strain>ATCC 204508 / S288c</strain>
    </source>
</reference>
<reference key="4">
    <citation type="journal article" date="2014" name="G3 (Bethesda)">
        <title>The reference genome sequence of Saccharomyces cerevisiae: Then and now.</title>
        <authorList>
            <person name="Engel S.R."/>
            <person name="Dietrich F.S."/>
            <person name="Fisk D.G."/>
            <person name="Binkley G."/>
            <person name="Balakrishnan R."/>
            <person name="Costanzo M.C."/>
            <person name="Dwight S.S."/>
            <person name="Hitz B.C."/>
            <person name="Karra K."/>
            <person name="Nash R.S."/>
            <person name="Weng S."/>
            <person name="Wong E.D."/>
            <person name="Lloyd P."/>
            <person name="Skrzypek M.S."/>
            <person name="Miyasato S.R."/>
            <person name="Simison M."/>
            <person name="Cherry J.M."/>
        </authorList>
    </citation>
    <scope>GENOME REANNOTATION</scope>
    <source>
        <strain>ATCC 204508 / S288c</strain>
    </source>
</reference>
<reference key="5">
    <citation type="journal article" date="1998" name="Yeast">
        <title>The list of cytoplasmic ribosomal proteins of Saccharomyces cerevisiae.</title>
        <authorList>
            <person name="Planta R.J."/>
            <person name="Mager W.H."/>
        </authorList>
    </citation>
    <scope>NOMENCLATURE</scope>
    <scope>SUBUNIT</scope>
</reference>
<reference key="6">
    <citation type="journal article" date="2002" name="Proc. Natl. Acad. Sci. U.S.A.">
        <title>Direct mass spectrometric analysis of intact proteins of the yeast large ribosomal subunit using capillary LC/FTICR.</title>
        <authorList>
            <person name="Lee S.-W."/>
            <person name="Berger S.J."/>
            <person name="Martinovic S."/>
            <person name="Pasa-Tolic L."/>
            <person name="Anderson G.A."/>
            <person name="Shen Y."/>
            <person name="Zhao R."/>
            <person name="Smith R.D."/>
        </authorList>
    </citation>
    <scope>MASS SPECTROMETRY</scope>
    <scope>CLEAVAGE OF INITIATOR METHIONINE</scope>
</reference>
<reference key="7">
    <citation type="journal article" date="2003" name="Nature">
        <title>Global analysis of protein localization in budding yeast.</title>
        <authorList>
            <person name="Huh W.-K."/>
            <person name="Falvo J.V."/>
            <person name="Gerke L.C."/>
            <person name="Carroll A.S."/>
            <person name="Howson R.W."/>
            <person name="Weissman J.S."/>
            <person name="O'Shea E.K."/>
        </authorList>
    </citation>
    <scope>SUBCELLULAR LOCATION [LARGE SCALE ANALYSIS]</scope>
</reference>
<reference key="8">
    <citation type="journal article" date="2003" name="Nature">
        <title>Global analysis of protein expression in yeast.</title>
        <authorList>
            <person name="Ghaemmaghami S."/>
            <person name="Huh W.-K."/>
            <person name="Bower K."/>
            <person name="Howson R.W."/>
            <person name="Belle A."/>
            <person name="Dephoure N."/>
            <person name="O'Shea E.K."/>
            <person name="Weissman J.S."/>
        </authorList>
    </citation>
    <scope>LEVEL OF PROTEIN EXPRESSION [LARGE SCALE ANALYSIS]</scope>
</reference>
<reference key="9">
    <citation type="journal article" date="2007" name="Proc. Natl. Acad. Sci. U.S.A.">
        <title>Analysis of phosphorylation sites on proteins from Saccharomyces cerevisiae by electron transfer dissociation (ETD) mass spectrometry.</title>
        <authorList>
            <person name="Chi A."/>
            <person name="Huttenhower C."/>
            <person name="Geer L.Y."/>
            <person name="Coon J.J."/>
            <person name="Syka J.E.P."/>
            <person name="Bai D.L."/>
            <person name="Shabanowitz J."/>
            <person name="Burke D.J."/>
            <person name="Troyanskaya O.G."/>
            <person name="Hunt D.F."/>
        </authorList>
    </citation>
    <scope>IDENTIFICATION BY MASS SPECTROMETRY [LARGE SCALE ANALYSIS]</scope>
</reference>
<reference key="10">
    <citation type="journal article" date="2008" name="Mol. Cell. Biol.">
        <title>Phosphorylation by casein kinase 2 regulates Nap1 localization and function.</title>
        <authorList>
            <person name="Calvert M.E.K."/>
            <person name="Keck K.M."/>
            <person name="Ptak C."/>
            <person name="Shabanowitz J."/>
            <person name="Hunt D.F."/>
            <person name="Pemberton L.F."/>
        </authorList>
    </citation>
    <scope>INTERACTION WITH NAP1</scope>
    <scope>IDENTIFICATION BY MASS SPECTROMETRY</scope>
</reference>
<reference key="11">
    <citation type="journal article" date="2011" name="Science">
        <title>The structure of the eukaryotic ribosome at 3.0 A resolution.</title>
        <authorList>
            <person name="Ben-Shem A."/>
            <person name="Garreau de Loubresse N."/>
            <person name="Melnikov S."/>
            <person name="Jenner L."/>
            <person name="Yusupova G."/>
            <person name="Yusupov M."/>
        </authorList>
    </citation>
    <scope>SUBUNIT</scope>
    <scope>SUBCELLULAR LOCATION</scope>
</reference>
<reference key="12">
    <citation type="journal article" date="2012" name="Proc. Natl. Acad. Sci. U.S.A.">
        <title>N-terminal acetylome analyses and functional insights of the N-terminal acetyltransferase NatB.</title>
        <authorList>
            <person name="Van Damme P."/>
            <person name="Lasa M."/>
            <person name="Polevoda B."/>
            <person name="Gazquez C."/>
            <person name="Elosegui-Artola A."/>
            <person name="Kim D.S."/>
            <person name="De Juan-Pardo E."/>
            <person name="Demeyer K."/>
            <person name="Hole K."/>
            <person name="Larrea E."/>
            <person name="Timmerman E."/>
            <person name="Prieto J."/>
            <person name="Arnesen T."/>
            <person name="Sherman F."/>
            <person name="Gevaert K."/>
            <person name="Aldabe R."/>
        </authorList>
    </citation>
    <scope>IDENTIFICATION BY MASS SPECTROMETRY [LARGE SCALE ANALYSIS]</scope>
</reference>
<reference key="13">
    <citation type="journal article" date="2012" name="Proteomics">
        <title>Sites of ubiquitin attachment in Saccharomyces cerevisiae.</title>
        <authorList>
            <person name="Starita L.M."/>
            <person name="Lo R.S."/>
            <person name="Eng J.K."/>
            <person name="von Haller P.D."/>
            <person name="Fields S."/>
        </authorList>
    </citation>
    <scope>UBIQUITINATION [LARGE SCALE ANALYSIS] AT LYS-116</scope>
    <scope>IDENTIFICATION BY MASS SPECTROMETRY [LARGE SCALE ANALYSIS]</scope>
</reference>
<reference key="14">
    <citation type="journal article" date="2012" name="Proteomics">
        <title>Methylation of translation-associated proteins in Saccharomyces cerevisiae: Identification of methylated lysines and their methyltransferases.</title>
        <authorList>
            <person name="Couttas T.A."/>
            <person name="Raftery M.J."/>
            <person name="Padula M.P."/>
            <person name="Herbert B.R."/>
            <person name="Wilkins M.R."/>
        </authorList>
    </citation>
    <scope>METHYLATION AT LYS-50</scope>
</reference>
<reference key="15">
    <citation type="journal article" date="2014" name="Curr. Opin. Struct. Biol.">
        <title>A new system for naming ribosomal proteins.</title>
        <authorList>
            <person name="Ban N."/>
            <person name="Beckmann R."/>
            <person name="Cate J.H.D."/>
            <person name="Dinman J.D."/>
            <person name="Dragon F."/>
            <person name="Ellis S.R."/>
            <person name="Lafontaine D.L.J."/>
            <person name="Lindahl L."/>
            <person name="Liljas A."/>
            <person name="Lipton J.M."/>
            <person name="McAlear M.A."/>
            <person name="Moore P.B."/>
            <person name="Noller H.F."/>
            <person name="Ortega J."/>
            <person name="Panse V.G."/>
            <person name="Ramakrishnan V."/>
            <person name="Spahn C.M.T."/>
            <person name="Steitz T.A."/>
            <person name="Tchorzewski M."/>
            <person name="Tollervey D."/>
            <person name="Warren A.J."/>
            <person name="Williamson J.R."/>
            <person name="Wilson D."/>
            <person name="Yonath A."/>
            <person name="Yusupov M."/>
        </authorList>
    </citation>
    <scope>NOMENCLATURE</scope>
</reference>
<reference key="16">
    <citation type="journal article" date="2012" name="Nat. Struct. Mol. Biol.">
        <title>Cryo-EM structures of Arx1 and maturation factors Rei1 and Jjj1 bound to the 60S ribosomal subunit.</title>
        <authorList>
            <person name="Greber B.J."/>
            <person name="Boehringer D."/>
            <person name="Montellese C."/>
            <person name="Ban N."/>
        </authorList>
    </citation>
    <scope>STRUCTURE BY ELECTRON MICROSCOPY (8.10 ANGSTROMS)</scope>
</reference>
<proteinExistence type="evidence at protein level"/>
<protein>
    <recommendedName>
        <fullName evidence="7">Large ribosomal subunit protein eL18B</fullName>
    </recommendedName>
    <alternativeName>
        <fullName evidence="8">60S ribosomal protein L18-B</fullName>
    </alternativeName>
    <alternativeName>
        <fullName>RP28</fullName>
    </alternativeName>
</protein>
<evidence type="ECO:0000269" key="1">
    <source>
    </source>
</evidence>
<evidence type="ECO:0000269" key="2">
    <source>
    </source>
</evidence>
<evidence type="ECO:0000269" key="3">
    <source>
    </source>
</evidence>
<evidence type="ECO:0000269" key="4">
    <source>
    </source>
</evidence>
<evidence type="ECO:0000269" key="5">
    <source>
    </source>
</evidence>
<evidence type="ECO:0000269" key="6">
    <source>
    </source>
</evidence>
<evidence type="ECO:0000303" key="7">
    <source>
    </source>
</evidence>
<evidence type="ECO:0000303" key="8">
    <source>
    </source>
</evidence>
<evidence type="ECO:0000305" key="9"/>
<evidence type="ECO:0000305" key="10">
    <source>
    </source>
</evidence>
<evidence type="ECO:0000305" key="11">
    <source>
    </source>
</evidence>
<evidence type="ECO:0007744" key="12">
    <source>
    </source>
</evidence>
<gene>
    <name evidence="8" type="primary">RPL18B</name>
    <name type="synonym">RP28B</name>
    <name type="ordered locus">YNL301C</name>
    <name type="ORF">N0425</name>
</gene>
<comment type="function">
    <text evidence="10">Component of the ribosome, a large ribonucleoprotein complex responsible for the synthesis of proteins in the cell. The small ribosomal subunit (SSU) binds messenger RNAs (mRNAs) and translates the encoded message by selecting cognate aminoacyl-transfer RNA (tRNA) molecules. The large subunit (LSU) contains the ribosomal catalytic site termed the peptidyl transferase center (PTC), which catalyzes the formation of peptide bonds, thereby polymerizing the amino acids delivered by tRNAs into a polypeptide chain. The nascent polypeptides leave the ribosome through a tunnel in the LSU and interact with protein factors that function in enzymatic processing, targeting, and the membrane insertion of nascent chains at the exit of the ribosomal tunnel.</text>
</comment>
<comment type="subunit">
    <text evidence="4 5 11">Component of the large ribosomal subunit (LSU). Mature yeast ribosomes consist of a small (40S) and a large (60S) subunit. The 40S small subunit contains 1 molecule of ribosomal RNA (18S rRNA) and 33 different proteins (encoded by 57 genes). The large 60S subunit contains 3 rRNA molecules (25S, 5.8S and 5S rRNA) and 46 different proteins (encoded by 81 genes) (PubMed:22096102, PubMed:9559554). eL18 interacts with NAP1 (PubMed:18086883).</text>
</comment>
<comment type="subcellular location">
    <subcellularLocation>
        <location evidence="2 5">Cytoplasm</location>
    </subcellularLocation>
</comment>
<comment type="mass spectrometry" mass="20419.432" method="Electrospray" evidence="1">
    <text>Monoisotopic mass.</text>
</comment>
<comment type="miscellaneous">
    <text evidence="3">Present with 63700 molecules/cell in log phase SD medium.</text>
</comment>
<comment type="miscellaneous">
    <text evidence="9">There are 2 genes for eL18 in yeast.</text>
</comment>
<comment type="similarity">
    <text evidence="9">Belongs to the eukaryotic ribosomal protein eL18 family.</text>
</comment>
<dbReference type="EMBL" id="X01100">
    <property type="protein sequence ID" value="CAA25574.1"/>
    <property type="molecule type" value="Genomic_DNA"/>
</dbReference>
<dbReference type="EMBL" id="U23084">
    <property type="protein sequence ID" value="AAC49097.1"/>
    <property type="molecule type" value="Genomic_DNA"/>
</dbReference>
<dbReference type="EMBL" id="Z71577">
    <property type="protein sequence ID" value="CAA96219.1"/>
    <property type="molecule type" value="Genomic_DNA"/>
</dbReference>
<dbReference type="EMBL" id="BK006947">
    <property type="protein sequence ID" value="DAA10259.1"/>
    <property type="molecule type" value="Genomic_DNA"/>
</dbReference>
<dbReference type="PIR" id="S05867">
    <property type="entry name" value="R5BY8E"/>
</dbReference>
<dbReference type="RefSeq" id="NP_014098.1">
    <property type="nucleotide sequence ID" value="NM_001183139.1"/>
</dbReference>
<dbReference type="PDB" id="4V8T">
    <property type="method" value="EM"/>
    <property type="resolution" value="8.10 A"/>
    <property type="chains" value="Q=1-186"/>
</dbReference>
<dbReference type="PDBsum" id="4V8T"/>
<dbReference type="SMR" id="P0CX50"/>
<dbReference type="BioGRID" id="34281">
    <property type="interactions" value="175"/>
</dbReference>
<dbReference type="BioGRID" id="35537">
    <property type="interactions" value="194"/>
</dbReference>
<dbReference type="ComplexPortal" id="CPX-1601">
    <property type="entry name" value="60S cytosolic large ribosomal subunit"/>
</dbReference>
<dbReference type="FunCoup" id="P0CX50">
    <property type="interactions" value="985"/>
</dbReference>
<dbReference type="IntAct" id="P0CX50">
    <property type="interactions" value="51"/>
</dbReference>
<dbReference type="MINT" id="P0CX50"/>
<dbReference type="CarbonylDB" id="P0CX50"/>
<dbReference type="iPTMnet" id="P0CX50"/>
<dbReference type="EnsemblFungi" id="YNL301C_mRNA">
    <property type="protein sequence ID" value="YNL301C"/>
    <property type="gene ID" value="YNL301C"/>
</dbReference>
<dbReference type="EnsemblFungi" id="YOL120C_mRNA">
    <property type="protein sequence ID" value="YOL120C"/>
    <property type="gene ID" value="YOL120C"/>
</dbReference>
<dbReference type="GeneID" id="855415"/>
<dbReference type="KEGG" id="sce:YNL301C"/>
<dbReference type="KEGG" id="sce:YOL120C"/>
<dbReference type="AGR" id="SGD:S000005245"/>
<dbReference type="SGD" id="S000005245">
    <property type="gene designation" value="RPL18B"/>
</dbReference>
<dbReference type="VEuPathDB" id="FungiDB:YNL301C"/>
<dbReference type="VEuPathDB" id="FungiDB:YOL120C"/>
<dbReference type="GeneTree" id="ENSGT00390000012976"/>
<dbReference type="HOGENOM" id="CLU_080024_0_1_1"/>
<dbReference type="InParanoid" id="P0CX50"/>
<dbReference type="OMA" id="IDICHKN"/>
<dbReference type="OrthoDB" id="6353017at2759"/>
<dbReference type="BioCyc" id="YEAST:G3O-33289-MONOMER"/>
<dbReference type="Reactome" id="R-SCE-156827">
    <property type="pathway name" value="L13a-mediated translational silencing of Ceruloplasmin expression"/>
</dbReference>
<dbReference type="Reactome" id="R-SCE-1799339">
    <property type="pathway name" value="SRP-dependent cotranslational protein targeting to membrane"/>
</dbReference>
<dbReference type="Reactome" id="R-SCE-72689">
    <property type="pathway name" value="Formation of a pool of free 40S subunits"/>
</dbReference>
<dbReference type="Reactome" id="R-SCE-72706">
    <property type="pathway name" value="GTP hydrolysis and joining of the 60S ribosomal subunit"/>
</dbReference>
<dbReference type="Reactome" id="R-SCE-975956">
    <property type="pathway name" value="Nonsense Mediated Decay (NMD) independent of the Exon Junction Complex (EJC)"/>
</dbReference>
<dbReference type="Reactome" id="R-SCE-975957">
    <property type="pathway name" value="Nonsense Mediated Decay (NMD) enhanced by the Exon Junction Complex (EJC)"/>
</dbReference>
<dbReference type="BioGRID-ORCS" id="854029">
    <property type="hits" value="2 hits in 10 CRISPR screens"/>
</dbReference>
<dbReference type="BioGRID-ORCS" id="855415">
    <property type="hits" value="6 hits in 10 CRISPR screens"/>
</dbReference>
<dbReference type="PRO" id="PR:P0CX50"/>
<dbReference type="Proteomes" id="UP000002311">
    <property type="component" value="Chromosome XIV"/>
</dbReference>
<dbReference type="RNAct" id="P0CX50">
    <property type="molecule type" value="protein"/>
</dbReference>
<dbReference type="ExpressionAtlas" id="P0CX50">
    <property type="expression patterns" value="baseline and differential"/>
</dbReference>
<dbReference type="GO" id="GO:0005829">
    <property type="term" value="C:cytosol"/>
    <property type="evidence" value="ECO:0000304"/>
    <property type="project" value="Reactome"/>
</dbReference>
<dbReference type="GO" id="GO:0022625">
    <property type="term" value="C:cytosolic large ribosomal subunit"/>
    <property type="evidence" value="ECO:0000314"/>
    <property type="project" value="SGD"/>
</dbReference>
<dbReference type="GO" id="GO:0003723">
    <property type="term" value="F:RNA binding"/>
    <property type="evidence" value="ECO:0000318"/>
    <property type="project" value="GO_Central"/>
</dbReference>
<dbReference type="GO" id="GO:0003735">
    <property type="term" value="F:structural constituent of ribosome"/>
    <property type="evidence" value="ECO:0000318"/>
    <property type="project" value="GO_Central"/>
</dbReference>
<dbReference type="GO" id="GO:0002181">
    <property type="term" value="P:cytoplasmic translation"/>
    <property type="evidence" value="ECO:0000305"/>
    <property type="project" value="SGD"/>
</dbReference>
<dbReference type="FunFam" id="3.100.10.10:FF:000001">
    <property type="entry name" value="60S ribosomal protein L18"/>
    <property type="match status" value="1"/>
</dbReference>
<dbReference type="Gene3D" id="3.100.10.10">
    <property type="match status" value="1"/>
</dbReference>
<dbReference type="InterPro" id="IPR000039">
    <property type="entry name" value="Ribosomal_eL18"/>
</dbReference>
<dbReference type="InterPro" id="IPR021132">
    <property type="entry name" value="Ribosomal_eL18/eL18-A/B/_CS"/>
</dbReference>
<dbReference type="InterPro" id="IPR021131">
    <property type="entry name" value="Ribosomal_uL15/eL18"/>
</dbReference>
<dbReference type="InterPro" id="IPR036227">
    <property type="entry name" value="Ribosomal_uL15/eL18_sf"/>
</dbReference>
<dbReference type="PANTHER" id="PTHR10934">
    <property type="entry name" value="60S RIBOSOMAL PROTEIN L18"/>
    <property type="match status" value="1"/>
</dbReference>
<dbReference type="PANTHER" id="PTHR10934:SF2">
    <property type="entry name" value="LARGE RIBOSOMAL SUBUNIT PROTEIN EL18"/>
    <property type="match status" value="1"/>
</dbReference>
<dbReference type="Pfam" id="PF17135">
    <property type="entry name" value="Ribosomal_L18"/>
    <property type="match status" value="1"/>
</dbReference>
<dbReference type="SUPFAM" id="SSF52080">
    <property type="entry name" value="Ribosomal proteins L15p and L18e"/>
    <property type="match status" value="1"/>
</dbReference>
<dbReference type="PROSITE" id="PS01106">
    <property type="entry name" value="RIBOSOMAL_L18E"/>
    <property type="match status" value="1"/>
</dbReference>